<name>CDHR1_CHICK</name>
<organism>
    <name type="scientific">Gallus gallus</name>
    <name type="common">Chicken</name>
    <dbReference type="NCBI Taxonomy" id="9031"/>
    <lineage>
        <taxon>Eukaryota</taxon>
        <taxon>Metazoa</taxon>
        <taxon>Chordata</taxon>
        <taxon>Craniata</taxon>
        <taxon>Vertebrata</taxon>
        <taxon>Euteleostomi</taxon>
        <taxon>Archelosauria</taxon>
        <taxon>Archosauria</taxon>
        <taxon>Dinosauria</taxon>
        <taxon>Saurischia</taxon>
        <taxon>Theropoda</taxon>
        <taxon>Coelurosauria</taxon>
        <taxon>Aves</taxon>
        <taxon>Neognathae</taxon>
        <taxon>Galloanserae</taxon>
        <taxon>Galliformes</taxon>
        <taxon>Phasianidae</taxon>
        <taxon>Phasianinae</taxon>
        <taxon>Gallus</taxon>
    </lineage>
</organism>
<proteinExistence type="evidence at transcript level"/>
<gene>
    <name type="primary">CDHR1</name>
    <name type="synonym">PCDH21</name>
    <name type="synonym">PRCAD</name>
</gene>
<protein>
    <recommendedName>
        <fullName>Cadherin-related family member 1</fullName>
    </recommendedName>
    <alternativeName>
        <fullName>Photoreceptor cadherin</fullName>
        <shortName>prCAD</shortName>
    </alternativeName>
    <alternativeName>
        <fullName>Protocadherin-21</fullName>
    </alternativeName>
</protein>
<keyword id="KW-0106">Calcium</keyword>
<keyword id="KW-0130">Cell adhesion</keyword>
<keyword id="KW-0472">Membrane</keyword>
<keyword id="KW-0675">Receptor</keyword>
<keyword id="KW-1185">Reference proteome</keyword>
<keyword id="KW-0677">Repeat</keyword>
<keyword id="KW-0732">Signal</keyword>
<keyword id="KW-0812">Transmembrane</keyword>
<keyword id="KW-1133">Transmembrane helix</keyword>
<feature type="signal peptide" evidence="1">
    <location>
        <begin position="1"/>
        <end position="23"/>
    </location>
</feature>
<feature type="chain" id="PRO_0000318501" description="Cadherin-related family member 1">
    <location>
        <begin position="24"/>
        <end position="865"/>
    </location>
</feature>
<feature type="topological domain" description="Extracellular" evidence="1">
    <location>
        <begin position="24"/>
        <end position="705"/>
    </location>
</feature>
<feature type="transmembrane region" description="Helical" evidence="1">
    <location>
        <begin position="706"/>
        <end position="726"/>
    </location>
</feature>
<feature type="topological domain" description="Cytoplasmic" evidence="1">
    <location>
        <begin position="727"/>
        <end position="865"/>
    </location>
</feature>
<feature type="domain" description="Cadherin 1" evidence="2">
    <location>
        <begin position="38"/>
        <end position="137"/>
    </location>
</feature>
<feature type="domain" description="Cadherin 2" evidence="2">
    <location>
        <begin position="138"/>
        <end position="249"/>
    </location>
</feature>
<feature type="domain" description="Cadherin 3" evidence="2">
    <location>
        <begin position="250"/>
        <end position="356"/>
    </location>
</feature>
<feature type="domain" description="Cadherin 4" evidence="2">
    <location>
        <begin position="362"/>
        <end position="475"/>
    </location>
</feature>
<feature type="domain" description="Cadherin 5" evidence="2">
    <location>
        <begin position="476"/>
        <end position="579"/>
    </location>
</feature>
<feature type="domain" description="Cadherin 6" evidence="2">
    <location>
        <begin position="571"/>
        <end position="690"/>
    </location>
</feature>
<feature type="region of interest" description="Disordered" evidence="3">
    <location>
        <begin position="782"/>
        <end position="810"/>
    </location>
</feature>
<feature type="compositionally biased region" description="Pro residues" evidence="3">
    <location>
        <begin position="792"/>
        <end position="805"/>
    </location>
</feature>
<reference key="1">
    <citation type="journal article" date="2001" name="Neuron">
        <title>A photoreceptor-specific cadherin is essential for the structural integrity of the outer segment and for photoreceptor survival.</title>
        <authorList>
            <person name="Rattner A."/>
            <person name="Smallwood P.M."/>
            <person name="Williams J."/>
            <person name="Cooke C."/>
            <person name="Savchenko A."/>
            <person name="Lyubarsky A."/>
            <person name="Pugh E.N."/>
            <person name="Nathans J."/>
        </authorList>
    </citation>
    <scope>NUCLEOTIDE SEQUENCE [MRNA]</scope>
</reference>
<sequence>MKHVRHFIPSLFLSLVHVCLVQANYAPYFFDNGARSTNGNMALLSLSEDTPVGSHVYTLNGTDPEGDPVTYGLTYEAGSRRYFSVDGNLGNVTLIEELDREKEDEIEVIVSISDGLSTVSEKVRILVMDANDESPEFINTPYIVQVPENSPSGSSIFKIEAVDRDTGSGGSITYFLQNIHANKFTIDRHSGVLRIKSGVTLDYEKSRTHFVVVVAKDGGGKLRGDNKVFSATTTVTVNVEDVQDTPPMFIGTPYYGYVYEDTLPGSEVLTVVALDGDRGKPNNIHYCIVNGSEGSFEISNTTGAISVIKSPNQLKKEVYELRVQASEVSPEGDVSAYAFATVTIRVVDLNNHPPTFYGESGPQNRFELTMYEHPPEGEILRGLKITVNDSDQGANAKFNLRLVGPGGIFRVVPLTVLNEAQVTIIVENSAAIDYEKFKVLTFKLLAIEVNTPEKFSSTADIAIRLLDTNDNVPKFSSDYYIARIPENSPGGSNVVAVTATDPDSGLWGEVKYSIYGTGADLFLIHPSTGIIYTQPWAVLDAEVNSKYNFYVKAEDTDGKYSLAEVFITVLDVNDHSPEFNENIQEKTMIIGSPVKIEAIDQDAEEPNNIVDYSIMQADPANVFDIDQSTGEIKLKSYIRSLDIIHNITKNKDCIWSLVVQAKDRGSPSFSTTAVLKIDITEETLHKGPMAAFLMQTKDNPMKALGVLAGVMGIMVLITIMISTAMFWRNKRSNKIMPVRRIIKKRQTQQSRTVRMEWLKFKRPSNAAEKFVVEDDAKSLQNENSNNNVQAAPVPPAAPLPPPPPALAASGNTTAWRVPTVSGSLTPKFINKQLKKRGHSSTHNALVSELKMKFEKRNASMGEPHI</sequence>
<comment type="function">
    <text>Potential calcium-dependent cell-adhesion protein.</text>
</comment>
<comment type="subcellular location">
    <subcellularLocation>
        <location evidence="4">Membrane</location>
        <topology evidence="4">Single-pass membrane protein</topology>
    </subcellularLocation>
</comment>
<dbReference type="EMBL" id="AF426394">
    <property type="protein sequence ID" value="AAL65141.1"/>
    <property type="molecule type" value="mRNA"/>
</dbReference>
<dbReference type="RefSeq" id="NP_001001759.1">
    <property type="nucleotide sequence ID" value="NM_001001759.2"/>
</dbReference>
<dbReference type="SMR" id="Q8UVJ7"/>
<dbReference type="FunCoup" id="Q8UVJ7">
    <property type="interactions" value="1"/>
</dbReference>
<dbReference type="STRING" id="9031.ENSGALP00000040376"/>
<dbReference type="PaxDb" id="9031-ENSGALP00000040376"/>
<dbReference type="GeneID" id="414847"/>
<dbReference type="KEGG" id="gga:414847"/>
<dbReference type="CTD" id="92211"/>
<dbReference type="VEuPathDB" id="HostDB:geneid_414847"/>
<dbReference type="eggNOG" id="KOG3594">
    <property type="taxonomic scope" value="Eukaryota"/>
</dbReference>
<dbReference type="InParanoid" id="Q8UVJ7"/>
<dbReference type="OrthoDB" id="6510378at2759"/>
<dbReference type="PhylomeDB" id="Q8UVJ7"/>
<dbReference type="PRO" id="PR:Q8UVJ7"/>
<dbReference type="Proteomes" id="UP000000539">
    <property type="component" value="Unassembled WGS sequence"/>
</dbReference>
<dbReference type="GO" id="GO:0005886">
    <property type="term" value="C:plasma membrane"/>
    <property type="evidence" value="ECO:0000318"/>
    <property type="project" value="GO_Central"/>
</dbReference>
<dbReference type="GO" id="GO:0005509">
    <property type="term" value="F:calcium ion binding"/>
    <property type="evidence" value="ECO:0007669"/>
    <property type="project" value="InterPro"/>
</dbReference>
<dbReference type="GO" id="GO:0007155">
    <property type="term" value="P:cell adhesion"/>
    <property type="evidence" value="ECO:0000318"/>
    <property type="project" value="GO_Central"/>
</dbReference>
<dbReference type="GO" id="GO:0007156">
    <property type="term" value="P:homophilic cell adhesion via plasma membrane adhesion molecules"/>
    <property type="evidence" value="ECO:0007669"/>
    <property type="project" value="InterPro"/>
</dbReference>
<dbReference type="CDD" id="cd11304">
    <property type="entry name" value="Cadherin_repeat"/>
    <property type="match status" value="6"/>
</dbReference>
<dbReference type="FunFam" id="2.60.40.60:FF:000111">
    <property type="entry name" value="Cadherin-related family member 1"/>
    <property type="match status" value="1"/>
</dbReference>
<dbReference type="FunFam" id="2.60.40.60:FF:000113">
    <property type="entry name" value="Cadherin-related family member 1"/>
    <property type="match status" value="1"/>
</dbReference>
<dbReference type="FunFam" id="2.60.40.60:FF:000122">
    <property type="entry name" value="Cadherin-related family member 1"/>
    <property type="match status" value="1"/>
</dbReference>
<dbReference type="FunFam" id="2.60.40.60:FF:000124">
    <property type="entry name" value="Cadherin-related family member 1"/>
    <property type="match status" value="1"/>
</dbReference>
<dbReference type="FunFam" id="2.60.40.60:FF:000126">
    <property type="entry name" value="Cadherin-related family member 1"/>
    <property type="match status" value="1"/>
</dbReference>
<dbReference type="FunFam" id="2.60.40.60:FF:000177">
    <property type="entry name" value="Cadherin-related family member 1"/>
    <property type="match status" value="1"/>
</dbReference>
<dbReference type="Gene3D" id="2.60.40.60">
    <property type="entry name" value="Cadherins"/>
    <property type="match status" value="6"/>
</dbReference>
<dbReference type="InterPro" id="IPR039808">
    <property type="entry name" value="Cadherin"/>
</dbReference>
<dbReference type="InterPro" id="IPR002126">
    <property type="entry name" value="Cadherin-like_dom"/>
</dbReference>
<dbReference type="InterPro" id="IPR015919">
    <property type="entry name" value="Cadherin-like_sf"/>
</dbReference>
<dbReference type="InterPro" id="IPR020894">
    <property type="entry name" value="Cadherin_CS"/>
</dbReference>
<dbReference type="PANTHER" id="PTHR24027:SF413">
    <property type="entry name" value="CADHERIN RELATED FAMILY MEMBER 1"/>
    <property type="match status" value="1"/>
</dbReference>
<dbReference type="PANTHER" id="PTHR24027">
    <property type="entry name" value="CADHERIN-23"/>
    <property type="match status" value="1"/>
</dbReference>
<dbReference type="Pfam" id="PF00028">
    <property type="entry name" value="Cadherin"/>
    <property type="match status" value="5"/>
</dbReference>
<dbReference type="PRINTS" id="PR00205">
    <property type="entry name" value="CADHERIN"/>
</dbReference>
<dbReference type="SMART" id="SM00112">
    <property type="entry name" value="CA"/>
    <property type="match status" value="6"/>
</dbReference>
<dbReference type="SUPFAM" id="SSF49313">
    <property type="entry name" value="Cadherin-like"/>
    <property type="match status" value="6"/>
</dbReference>
<dbReference type="PROSITE" id="PS00232">
    <property type="entry name" value="CADHERIN_1"/>
    <property type="match status" value="2"/>
</dbReference>
<dbReference type="PROSITE" id="PS50268">
    <property type="entry name" value="CADHERIN_2"/>
    <property type="match status" value="6"/>
</dbReference>
<evidence type="ECO:0000255" key="1"/>
<evidence type="ECO:0000255" key="2">
    <source>
        <dbReference type="PROSITE-ProRule" id="PRU00043"/>
    </source>
</evidence>
<evidence type="ECO:0000256" key="3">
    <source>
        <dbReference type="SAM" id="MobiDB-lite"/>
    </source>
</evidence>
<evidence type="ECO:0000305" key="4"/>
<accession>Q8UVJ7</accession>